<comment type="function">
    <text>Serine/threonine-protein kinase which is required for checkpoint-mediated cell cycle arrest and activation of DNA repair in response to the presence of DNA damage or unreplicated DNA. May also negatively regulate cell cycle progression during unperturbed cell cycles. Controls phosphorylation and abundance of PDS1 to prevent anaphase entry. Also helps prevent mitotic exit.</text>
</comment>
<comment type="catalytic activity">
    <reaction>
        <text>L-seryl-[protein] + ATP = O-phospho-L-seryl-[protein] + ADP + H(+)</text>
        <dbReference type="Rhea" id="RHEA:17989"/>
        <dbReference type="Rhea" id="RHEA-COMP:9863"/>
        <dbReference type="Rhea" id="RHEA-COMP:11604"/>
        <dbReference type="ChEBI" id="CHEBI:15378"/>
        <dbReference type="ChEBI" id="CHEBI:29999"/>
        <dbReference type="ChEBI" id="CHEBI:30616"/>
        <dbReference type="ChEBI" id="CHEBI:83421"/>
        <dbReference type="ChEBI" id="CHEBI:456216"/>
        <dbReference type="EC" id="2.7.11.1"/>
    </reaction>
</comment>
<comment type="catalytic activity">
    <reaction>
        <text>L-threonyl-[protein] + ATP = O-phospho-L-threonyl-[protein] + ADP + H(+)</text>
        <dbReference type="Rhea" id="RHEA:46608"/>
        <dbReference type="Rhea" id="RHEA-COMP:11060"/>
        <dbReference type="Rhea" id="RHEA-COMP:11605"/>
        <dbReference type="ChEBI" id="CHEBI:15378"/>
        <dbReference type="ChEBI" id="CHEBI:30013"/>
        <dbReference type="ChEBI" id="CHEBI:30616"/>
        <dbReference type="ChEBI" id="CHEBI:61977"/>
        <dbReference type="ChEBI" id="CHEBI:456216"/>
        <dbReference type="EC" id="2.7.11.1"/>
    </reaction>
</comment>
<comment type="interaction">
    <interactant intactId="EBI-4593">
        <id>P38147</id>
    </interactant>
    <interactant intactId="EBI-4192">
        <id>Q00684</id>
        <label>CDC14</label>
    </interactant>
    <organismsDiffer>false</organismsDiffer>
    <experiments>2</experiments>
</comment>
<comment type="subcellular location">
    <subcellularLocation>
        <location evidence="1">Nucleus</location>
    </subcellularLocation>
</comment>
<comment type="miscellaneous">
    <text evidence="4">Present with 2530 molecules/cell in log phase SD medium.</text>
</comment>
<comment type="similarity">
    <text evidence="5">Belongs to the protein kinase superfamily. CAMK Ser/Thr protein kinase family. NIM1 subfamily.</text>
</comment>
<reference key="1">
    <citation type="journal article" date="1999" name="Science">
        <title>Control of the DNA damage checkpoint by chk1 and rad53 protein kinases through distinct mechanisms.</title>
        <authorList>
            <person name="Sanchez Y."/>
            <person name="Bachant J."/>
            <person name="Wang H."/>
            <person name="Hu F."/>
            <person name="Liu D."/>
            <person name="Tetzlaff M."/>
            <person name="Elledge S.J."/>
        </authorList>
    </citation>
    <scope>NUCLEOTIDE SEQUENCE [GENOMIC DNA]</scope>
</reference>
<reference key="2">
    <citation type="journal article" date="1994" name="EMBO J.">
        <title>Complete DNA sequence of yeast chromosome II.</title>
        <authorList>
            <person name="Feldmann H."/>
            <person name="Aigle M."/>
            <person name="Aljinovic G."/>
            <person name="Andre B."/>
            <person name="Baclet M.C."/>
            <person name="Barthe C."/>
            <person name="Baur A."/>
            <person name="Becam A.-M."/>
            <person name="Biteau N."/>
            <person name="Boles E."/>
            <person name="Brandt T."/>
            <person name="Brendel M."/>
            <person name="Brueckner M."/>
            <person name="Bussereau F."/>
            <person name="Christiansen C."/>
            <person name="Contreras R."/>
            <person name="Crouzet M."/>
            <person name="Cziepluch C."/>
            <person name="Demolis N."/>
            <person name="Delaveau T."/>
            <person name="Doignon F."/>
            <person name="Domdey H."/>
            <person name="Duesterhus S."/>
            <person name="Dubois E."/>
            <person name="Dujon B."/>
            <person name="El Bakkoury M."/>
            <person name="Entian K.-D."/>
            <person name="Feuermann M."/>
            <person name="Fiers W."/>
            <person name="Fobo G.M."/>
            <person name="Fritz C."/>
            <person name="Gassenhuber J."/>
            <person name="Glansdorff N."/>
            <person name="Goffeau A."/>
            <person name="Grivell L.A."/>
            <person name="de Haan M."/>
            <person name="Hein C."/>
            <person name="Herbert C.J."/>
            <person name="Hollenberg C.P."/>
            <person name="Holmstroem K."/>
            <person name="Jacq C."/>
            <person name="Jacquet M."/>
            <person name="Jauniaux J.-C."/>
            <person name="Jonniaux J.-L."/>
            <person name="Kallesoee T."/>
            <person name="Kiesau P."/>
            <person name="Kirchrath L."/>
            <person name="Koetter P."/>
            <person name="Korol S."/>
            <person name="Liebl S."/>
            <person name="Logghe M."/>
            <person name="Lohan A.J.E."/>
            <person name="Louis E.J."/>
            <person name="Li Z.Y."/>
            <person name="Maat M.J."/>
            <person name="Mallet L."/>
            <person name="Mannhaupt G."/>
            <person name="Messenguy F."/>
            <person name="Miosga T."/>
            <person name="Molemans F."/>
            <person name="Mueller S."/>
            <person name="Nasr F."/>
            <person name="Obermaier B."/>
            <person name="Perea J."/>
            <person name="Pierard A."/>
            <person name="Piravandi E."/>
            <person name="Pohl F.M."/>
            <person name="Pohl T.M."/>
            <person name="Potier S."/>
            <person name="Proft M."/>
            <person name="Purnelle B."/>
            <person name="Ramezani Rad M."/>
            <person name="Rieger M."/>
            <person name="Rose M."/>
            <person name="Schaaff-Gerstenschlaeger I."/>
            <person name="Scherens B."/>
            <person name="Schwarzlose C."/>
            <person name="Skala J."/>
            <person name="Slonimski P.P."/>
            <person name="Smits P.H.M."/>
            <person name="Souciet J.-L."/>
            <person name="Steensma H.Y."/>
            <person name="Stucka R."/>
            <person name="Urrestarazu L.A."/>
            <person name="van der Aart Q.J.M."/>
            <person name="Van Dyck L."/>
            <person name="Vassarotti A."/>
            <person name="Vetter I."/>
            <person name="Vierendeels F."/>
            <person name="Vissers S."/>
            <person name="Wagner G."/>
            <person name="de Wergifosse P."/>
            <person name="Wolfe K.H."/>
            <person name="Zagulski M."/>
            <person name="Zimmermann F.K."/>
            <person name="Mewes H.-W."/>
            <person name="Kleine K."/>
        </authorList>
    </citation>
    <scope>NUCLEOTIDE SEQUENCE [LARGE SCALE GENOMIC DNA]</scope>
    <source>
        <strain>ATCC 204508 / S288c</strain>
    </source>
</reference>
<reference key="3">
    <citation type="journal article" date="2014" name="G3 (Bethesda)">
        <title>The reference genome sequence of Saccharomyces cerevisiae: Then and now.</title>
        <authorList>
            <person name="Engel S.R."/>
            <person name="Dietrich F.S."/>
            <person name="Fisk D.G."/>
            <person name="Binkley G."/>
            <person name="Balakrishnan R."/>
            <person name="Costanzo M.C."/>
            <person name="Dwight S.S."/>
            <person name="Hitz B.C."/>
            <person name="Karra K."/>
            <person name="Nash R.S."/>
            <person name="Weng S."/>
            <person name="Wong E.D."/>
            <person name="Lloyd P."/>
            <person name="Skrzypek M.S."/>
            <person name="Miyasato S.R."/>
            <person name="Simison M."/>
            <person name="Cherry J.M."/>
        </authorList>
    </citation>
    <scope>GENOME REANNOTATION</scope>
    <source>
        <strain>ATCC 204508 / S288c</strain>
    </source>
</reference>
<reference key="4">
    <citation type="journal article" date="2003" name="Nature">
        <title>Global analysis of protein expression in yeast.</title>
        <authorList>
            <person name="Ghaemmaghami S."/>
            <person name="Huh W.-K."/>
            <person name="Bower K."/>
            <person name="Howson R.W."/>
            <person name="Belle A."/>
            <person name="Dephoure N."/>
            <person name="O'Shea E.K."/>
            <person name="Weissman J.S."/>
        </authorList>
    </citation>
    <scope>LEVEL OF PROTEIN EXPRESSION [LARGE SCALE ANALYSIS]</scope>
</reference>
<gene>
    <name type="primary">CHK1</name>
    <name type="ordered locus">YBR274W</name>
    <name type="ORF">YBR1742</name>
</gene>
<accession>P38147</accession>
<accession>D6VQS0</accession>
<sequence>MSLSQVSPLPHIKDVVLGDTVGQGAFACVKNAHLQMDPSIILAVKFIHVPTCKKMGLSDKDITKEVVLQSKCSKHPNVLRLIDCNVSKEYMWIILEMADGGDLFDKIEPDVGVDSDVAQFYFQQLVSAINYLHVECGVAHRDIKPENILLDKNGNLKLADFGLASQFRRKDGTLRVSMDQRGSPPYMAPEVLYSEEGYYADRTDIWSIGILLFVLLTGQTPWELPSLENEDFVFFIENDGNLNWGPWSKIEFTHLNLLRKILQPDPNKRVTLKALKLHPWVLRRASFSGDDGLCNDPELLAKKLFSHLKVSLSNENYLKFTQDTNSNNRYISTQPIGNELAELEHDSMHFQTVSNTQRAFTSYDSNTNYNSGTGMTQEAKWTQFISYDIAALQFHSDENDCNELVKRHLQFNPNKLTKFYTLQPMDVLLPILEKALNLSQIRVKPDLFANFERLCELLGYDNVFPLIINIKTKSNGGYQLCGSISIIKIEEELKSVGFERKTGDPLEWRRLFKKISTICRDIILIPN</sequence>
<protein>
    <recommendedName>
        <fullName>Serine/threonine-protein kinase CHK1</fullName>
        <ecNumber>2.7.11.1</ecNumber>
    </recommendedName>
    <alternativeName>
        <fullName>Checkpoint kinase 1</fullName>
    </alternativeName>
</protein>
<proteinExistence type="evidence at protein level"/>
<feature type="chain" id="PRO_0000085857" description="Serine/threonine-protein kinase CHK1">
    <location>
        <begin position="1"/>
        <end position="527"/>
    </location>
</feature>
<feature type="domain" description="Protein kinase" evidence="2">
    <location>
        <begin position="15"/>
        <end position="281"/>
    </location>
</feature>
<feature type="active site" description="Proton acceptor" evidence="2 3">
    <location>
        <position position="142"/>
    </location>
</feature>
<feature type="binding site" evidence="2">
    <location>
        <begin position="21"/>
        <end position="29"/>
    </location>
    <ligand>
        <name>ATP</name>
        <dbReference type="ChEBI" id="CHEBI:30616"/>
    </ligand>
</feature>
<feature type="binding site" evidence="2">
    <location>
        <position position="45"/>
    </location>
    <ligand>
        <name>ATP</name>
        <dbReference type="ChEBI" id="CHEBI:30616"/>
    </ligand>
</feature>
<keyword id="KW-0067">ATP-binding</keyword>
<keyword id="KW-0131">Cell cycle</keyword>
<keyword id="KW-0227">DNA damage</keyword>
<keyword id="KW-0418">Kinase</keyword>
<keyword id="KW-0547">Nucleotide-binding</keyword>
<keyword id="KW-0539">Nucleus</keyword>
<keyword id="KW-1185">Reference proteome</keyword>
<keyword id="KW-0723">Serine/threonine-protein kinase</keyword>
<keyword id="KW-0808">Transferase</keyword>
<name>CHK1_YEAST</name>
<organism>
    <name type="scientific">Saccharomyces cerevisiae (strain ATCC 204508 / S288c)</name>
    <name type="common">Baker's yeast</name>
    <dbReference type="NCBI Taxonomy" id="559292"/>
    <lineage>
        <taxon>Eukaryota</taxon>
        <taxon>Fungi</taxon>
        <taxon>Dikarya</taxon>
        <taxon>Ascomycota</taxon>
        <taxon>Saccharomycotina</taxon>
        <taxon>Saccharomycetes</taxon>
        <taxon>Saccharomycetales</taxon>
        <taxon>Saccharomycetaceae</taxon>
        <taxon>Saccharomyces</taxon>
    </lineage>
</organism>
<dbReference type="EC" id="2.7.11.1"/>
<dbReference type="EMBL" id="AF117345">
    <property type="protein sequence ID" value="AAD17231.1"/>
    <property type="molecule type" value="Genomic_DNA"/>
</dbReference>
<dbReference type="EMBL" id="Z36143">
    <property type="protein sequence ID" value="CAA85237.1"/>
    <property type="molecule type" value="Genomic_DNA"/>
</dbReference>
<dbReference type="EMBL" id="BK006936">
    <property type="protein sequence ID" value="DAA07390.1"/>
    <property type="molecule type" value="Genomic_DNA"/>
</dbReference>
<dbReference type="PIR" id="S46155">
    <property type="entry name" value="S46155"/>
</dbReference>
<dbReference type="RefSeq" id="NP_009833.1">
    <property type="nucleotide sequence ID" value="NM_001178622.1"/>
</dbReference>
<dbReference type="SMR" id="P38147"/>
<dbReference type="BioGRID" id="32969">
    <property type="interactions" value="439"/>
</dbReference>
<dbReference type="DIP" id="DIP-1253N"/>
<dbReference type="FunCoup" id="P38147">
    <property type="interactions" value="712"/>
</dbReference>
<dbReference type="IntAct" id="P38147">
    <property type="interactions" value="37"/>
</dbReference>
<dbReference type="MINT" id="P38147"/>
<dbReference type="STRING" id="4932.YBR274W"/>
<dbReference type="iPTMnet" id="P38147"/>
<dbReference type="PaxDb" id="4932-YBR274W"/>
<dbReference type="PeptideAtlas" id="P38147"/>
<dbReference type="EnsemblFungi" id="YBR274W_mRNA">
    <property type="protein sequence ID" value="YBR274W"/>
    <property type="gene ID" value="YBR274W"/>
</dbReference>
<dbReference type="GeneID" id="852577"/>
<dbReference type="KEGG" id="sce:YBR274W"/>
<dbReference type="AGR" id="SGD:S000000478"/>
<dbReference type="SGD" id="S000000478">
    <property type="gene designation" value="CHK1"/>
</dbReference>
<dbReference type="VEuPathDB" id="FungiDB:YBR274W"/>
<dbReference type="eggNOG" id="KOG0590">
    <property type="taxonomic scope" value="Eukaryota"/>
</dbReference>
<dbReference type="GeneTree" id="ENSGT00940000167959"/>
<dbReference type="HOGENOM" id="CLU_000288_59_8_1"/>
<dbReference type="InParanoid" id="P38147"/>
<dbReference type="OMA" id="ACIKKAC"/>
<dbReference type="OrthoDB" id="539158at2759"/>
<dbReference type="BioCyc" id="YEAST:G3O-29195-MONOMER"/>
<dbReference type="BRENDA" id="2.7.11.1">
    <property type="organism ID" value="984"/>
</dbReference>
<dbReference type="BioGRID-ORCS" id="852577">
    <property type="hits" value="0 hits in 13 CRISPR screens"/>
</dbReference>
<dbReference type="CD-CODE" id="E03F929F">
    <property type="entry name" value="Stress granule"/>
</dbReference>
<dbReference type="PRO" id="PR:P38147"/>
<dbReference type="Proteomes" id="UP000002311">
    <property type="component" value="Chromosome II"/>
</dbReference>
<dbReference type="RNAct" id="P38147">
    <property type="molecule type" value="protein"/>
</dbReference>
<dbReference type="GO" id="GO:0005737">
    <property type="term" value="C:cytoplasm"/>
    <property type="evidence" value="ECO:0000318"/>
    <property type="project" value="GO_Central"/>
</dbReference>
<dbReference type="GO" id="GO:0005634">
    <property type="term" value="C:nucleus"/>
    <property type="evidence" value="ECO:0000353"/>
    <property type="project" value="SGD"/>
</dbReference>
<dbReference type="GO" id="GO:0035861">
    <property type="term" value="C:site of double-strand break"/>
    <property type="evidence" value="ECO:0000318"/>
    <property type="project" value="GO_Central"/>
</dbReference>
<dbReference type="GO" id="GO:0005524">
    <property type="term" value="F:ATP binding"/>
    <property type="evidence" value="ECO:0007669"/>
    <property type="project" value="UniProtKB-KW"/>
</dbReference>
<dbReference type="GO" id="GO:0106310">
    <property type="term" value="F:protein serine kinase activity"/>
    <property type="evidence" value="ECO:0007669"/>
    <property type="project" value="RHEA"/>
</dbReference>
<dbReference type="GO" id="GO:0004674">
    <property type="term" value="F:protein serine/threonine kinase activity"/>
    <property type="evidence" value="ECO:0000314"/>
    <property type="project" value="SGD"/>
</dbReference>
<dbReference type="GO" id="GO:0000077">
    <property type="term" value="P:DNA damage checkpoint signaling"/>
    <property type="evidence" value="ECO:0000314"/>
    <property type="project" value="SGD"/>
</dbReference>
<dbReference type="GO" id="GO:0007095">
    <property type="term" value="P:mitotic G2 DNA damage checkpoint signaling"/>
    <property type="evidence" value="ECO:0000318"/>
    <property type="project" value="GO_Central"/>
</dbReference>
<dbReference type="GO" id="GO:0031297">
    <property type="term" value="P:replication fork processing"/>
    <property type="evidence" value="ECO:0000316"/>
    <property type="project" value="SGD"/>
</dbReference>
<dbReference type="FunFam" id="1.10.510.10:FF:001035">
    <property type="entry name" value="Serine/threonine-protein kinase CHK1"/>
    <property type="match status" value="1"/>
</dbReference>
<dbReference type="Gene3D" id="1.10.510.10">
    <property type="entry name" value="Transferase(Phosphotransferase) domain 1"/>
    <property type="match status" value="1"/>
</dbReference>
<dbReference type="InterPro" id="IPR011009">
    <property type="entry name" value="Kinase-like_dom_sf"/>
</dbReference>
<dbReference type="InterPro" id="IPR000719">
    <property type="entry name" value="Prot_kinase_dom"/>
</dbReference>
<dbReference type="InterPro" id="IPR017441">
    <property type="entry name" value="Protein_kinase_ATP_BS"/>
</dbReference>
<dbReference type="InterPro" id="IPR008271">
    <property type="entry name" value="Ser/Thr_kinase_AS"/>
</dbReference>
<dbReference type="PANTHER" id="PTHR43895">
    <property type="entry name" value="CALCIUM/CALMODULIN-DEPENDENT PROTEIN KINASE KINASE-RELATED"/>
    <property type="match status" value="1"/>
</dbReference>
<dbReference type="PANTHER" id="PTHR43895:SF32">
    <property type="entry name" value="SERINE_THREONINE-PROTEIN KINASE CHK1"/>
    <property type="match status" value="1"/>
</dbReference>
<dbReference type="Pfam" id="PF00069">
    <property type="entry name" value="Pkinase"/>
    <property type="match status" value="1"/>
</dbReference>
<dbReference type="SMART" id="SM00220">
    <property type="entry name" value="S_TKc"/>
    <property type="match status" value="1"/>
</dbReference>
<dbReference type="SUPFAM" id="SSF56112">
    <property type="entry name" value="Protein kinase-like (PK-like)"/>
    <property type="match status" value="1"/>
</dbReference>
<dbReference type="PROSITE" id="PS00107">
    <property type="entry name" value="PROTEIN_KINASE_ATP"/>
    <property type="match status" value="1"/>
</dbReference>
<dbReference type="PROSITE" id="PS50011">
    <property type="entry name" value="PROTEIN_KINASE_DOM"/>
    <property type="match status" value="1"/>
</dbReference>
<dbReference type="PROSITE" id="PS00108">
    <property type="entry name" value="PROTEIN_KINASE_ST"/>
    <property type="match status" value="1"/>
</dbReference>
<evidence type="ECO:0000250" key="1"/>
<evidence type="ECO:0000255" key="2">
    <source>
        <dbReference type="PROSITE-ProRule" id="PRU00159"/>
    </source>
</evidence>
<evidence type="ECO:0000255" key="3">
    <source>
        <dbReference type="PROSITE-ProRule" id="PRU10027"/>
    </source>
</evidence>
<evidence type="ECO:0000269" key="4">
    <source>
    </source>
</evidence>
<evidence type="ECO:0000305" key="5"/>